<organism>
    <name type="scientific">Methylorubrum extorquens (strain PA1)</name>
    <name type="common">Methylobacterium extorquens</name>
    <dbReference type="NCBI Taxonomy" id="419610"/>
    <lineage>
        <taxon>Bacteria</taxon>
        <taxon>Pseudomonadati</taxon>
        <taxon>Pseudomonadota</taxon>
        <taxon>Alphaproteobacteria</taxon>
        <taxon>Hyphomicrobiales</taxon>
        <taxon>Methylobacteriaceae</taxon>
        <taxon>Methylorubrum</taxon>
    </lineage>
</organism>
<keyword id="KW-0066">ATP synthesis</keyword>
<keyword id="KW-0997">Cell inner membrane</keyword>
<keyword id="KW-1003">Cell membrane</keyword>
<keyword id="KW-0139">CF(1)</keyword>
<keyword id="KW-0375">Hydrogen ion transport</keyword>
<keyword id="KW-0406">Ion transport</keyword>
<keyword id="KW-0472">Membrane</keyword>
<keyword id="KW-0813">Transport</keyword>
<protein>
    <recommendedName>
        <fullName evidence="1">ATP synthase subunit delta</fullName>
    </recommendedName>
    <alternativeName>
        <fullName evidence="1">ATP synthase F(1) sector subunit delta</fullName>
    </alternativeName>
    <alternativeName>
        <fullName evidence="1">F-type ATPase subunit delta</fullName>
        <shortName evidence="1">F-ATPase subunit delta</shortName>
    </alternativeName>
</protein>
<accession>A9W2R4</accession>
<proteinExistence type="inferred from homology"/>
<reference key="1">
    <citation type="submission" date="2007-12" db="EMBL/GenBank/DDBJ databases">
        <title>Complete sequence of Methylobacterium extorquens PA1.</title>
        <authorList>
            <consortium name="US DOE Joint Genome Institute"/>
            <person name="Copeland A."/>
            <person name="Lucas S."/>
            <person name="Lapidus A."/>
            <person name="Barry K."/>
            <person name="Glavina del Rio T."/>
            <person name="Dalin E."/>
            <person name="Tice H."/>
            <person name="Pitluck S."/>
            <person name="Saunders E."/>
            <person name="Brettin T."/>
            <person name="Bruce D."/>
            <person name="Detter J.C."/>
            <person name="Han C."/>
            <person name="Schmutz J."/>
            <person name="Larimer F."/>
            <person name="Land M."/>
            <person name="Hauser L."/>
            <person name="Kyrpides N."/>
            <person name="Kim E."/>
            <person name="Marx C."/>
            <person name="Richardson P."/>
        </authorList>
    </citation>
    <scope>NUCLEOTIDE SEQUENCE [LARGE SCALE GENOMIC DNA]</scope>
    <source>
        <strain>PA1</strain>
    </source>
</reference>
<evidence type="ECO:0000255" key="1">
    <source>
        <dbReference type="HAMAP-Rule" id="MF_01416"/>
    </source>
</evidence>
<evidence type="ECO:0000305" key="2"/>
<gene>
    <name evidence="1" type="primary">atpH</name>
    <name type="ordered locus">Mext_1469</name>
</gene>
<name>ATPD_METEP</name>
<feature type="chain" id="PRO_0000371023" description="ATP synthase subunit delta">
    <location>
        <begin position="1"/>
        <end position="189"/>
    </location>
</feature>
<dbReference type="EMBL" id="CP000908">
    <property type="protein sequence ID" value="ABY29870.1"/>
    <property type="status" value="ALT_INIT"/>
    <property type="molecule type" value="Genomic_DNA"/>
</dbReference>
<dbReference type="RefSeq" id="WP_042508770.1">
    <property type="nucleotide sequence ID" value="NC_010172.1"/>
</dbReference>
<dbReference type="SMR" id="A9W2R4"/>
<dbReference type="KEGG" id="mex:Mext_1469"/>
<dbReference type="eggNOG" id="COG0712">
    <property type="taxonomic scope" value="Bacteria"/>
</dbReference>
<dbReference type="HOGENOM" id="CLU_085114_0_1_5"/>
<dbReference type="BioCyc" id="MEXT419610:MEXT_RS07465-MONOMER"/>
<dbReference type="GO" id="GO:0005886">
    <property type="term" value="C:plasma membrane"/>
    <property type="evidence" value="ECO:0007669"/>
    <property type="project" value="UniProtKB-SubCell"/>
</dbReference>
<dbReference type="GO" id="GO:0045259">
    <property type="term" value="C:proton-transporting ATP synthase complex"/>
    <property type="evidence" value="ECO:0007669"/>
    <property type="project" value="UniProtKB-KW"/>
</dbReference>
<dbReference type="GO" id="GO:0046933">
    <property type="term" value="F:proton-transporting ATP synthase activity, rotational mechanism"/>
    <property type="evidence" value="ECO:0007669"/>
    <property type="project" value="UniProtKB-UniRule"/>
</dbReference>
<dbReference type="Gene3D" id="1.10.520.20">
    <property type="entry name" value="N-terminal domain of the delta subunit of the F1F0-ATP synthase"/>
    <property type="match status" value="1"/>
</dbReference>
<dbReference type="HAMAP" id="MF_01416">
    <property type="entry name" value="ATP_synth_delta_bact"/>
    <property type="match status" value="1"/>
</dbReference>
<dbReference type="InterPro" id="IPR026015">
    <property type="entry name" value="ATP_synth_OSCP/delta_N_sf"/>
</dbReference>
<dbReference type="InterPro" id="IPR020781">
    <property type="entry name" value="ATPase_OSCP/d_CS"/>
</dbReference>
<dbReference type="InterPro" id="IPR000711">
    <property type="entry name" value="ATPase_OSCP/dsu"/>
</dbReference>
<dbReference type="NCBIfam" id="TIGR01145">
    <property type="entry name" value="ATP_synt_delta"/>
    <property type="match status" value="1"/>
</dbReference>
<dbReference type="NCBIfam" id="NF004406">
    <property type="entry name" value="PRK05758.3-2"/>
    <property type="match status" value="1"/>
</dbReference>
<dbReference type="PANTHER" id="PTHR11910">
    <property type="entry name" value="ATP SYNTHASE DELTA CHAIN"/>
    <property type="match status" value="1"/>
</dbReference>
<dbReference type="Pfam" id="PF00213">
    <property type="entry name" value="OSCP"/>
    <property type="match status" value="1"/>
</dbReference>
<dbReference type="PRINTS" id="PR00125">
    <property type="entry name" value="ATPASEDELTA"/>
</dbReference>
<dbReference type="SUPFAM" id="SSF47928">
    <property type="entry name" value="N-terminal domain of the delta subunit of the F1F0-ATP synthase"/>
    <property type="match status" value="1"/>
</dbReference>
<dbReference type="PROSITE" id="PS00389">
    <property type="entry name" value="ATPASE_DELTA"/>
    <property type="match status" value="1"/>
</dbReference>
<sequence>MAQNGSEGPLLAGVAGRYALALYELAHDQGQVDDVAKNLDAFDALYRESDDLRRLVRSPAYSAAEQTAAVGALLDRAGISGLAANFIKLTADNRRLFALPGMIRAYREKVRESKGIIRAEVRVAEKPSDAVIEDIKASLRDVAKSEIDLDLHIDPSLIGGIVVKMGSRMVDASLRTKLNSIRLAMREAR</sequence>
<comment type="function">
    <text evidence="1">F(1)F(0) ATP synthase produces ATP from ADP in the presence of a proton or sodium gradient. F-type ATPases consist of two structural domains, F(1) containing the extramembraneous catalytic core and F(0) containing the membrane proton channel, linked together by a central stalk and a peripheral stalk. During catalysis, ATP synthesis in the catalytic domain of F(1) is coupled via a rotary mechanism of the central stalk subunits to proton translocation.</text>
</comment>
<comment type="function">
    <text evidence="1">This protein is part of the stalk that links CF(0) to CF(1). It either transmits conformational changes from CF(0) to CF(1) or is implicated in proton conduction.</text>
</comment>
<comment type="subunit">
    <text evidence="1">F-type ATPases have 2 components, F(1) - the catalytic core - and F(0) - the membrane proton channel. F(1) has five subunits: alpha(3), beta(3), gamma(1), delta(1), epsilon(1). F(0) has three main subunits: a(1), b(2) and c(10-14). The alpha and beta chains form an alternating ring which encloses part of the gamma chain. F(1) is attached to F(0) by a central stalk formed by the gamma and epsilon chains, while a peripheral stalk is formed by the delta and b chains.</text>
</comment>
<comment type="subcellular location">
    <subcellularLocation>
        <location evidence="1">Cell inner membrane</location>
        <topology evidence="1">Peripheral membrane protein</topology>
    </subcellularLocation>
</comment>
<comment type="similarity">
    <text evidence="1">Belongs to the ATPase delta chain family.</text>
</comment>
<comment type="sequence caution" evidence="2">
    <conflict type="erroneous initiation">
        <sequence resource="EMBL-CDS" id="ABY29870"/>
    </conflict>
</comment>